<comment type="function">
    <text evidence="1">The alpha subunit is responsible for the aldol cleavage of indoleglycerol phosphate to indole and glyceraldehyde 3-phosphate.</text>
</comment>
<comment type="catalytic activity">
    <reaction evidence="1">
        <text>(1S,2R)-1-C-(indol-3-yl)glycerol 3-phosphate + L-serine = D-glyceraldehyde 3-phosphate + L-tryptophan + H2O</text>
        <dbReference type="Rhea" id="RHEA:10532"/>
        <dbReference type="ChEBI" id="CHEBI:15377"/>
        <dbReference type="ChEBI" id="CHEBI:33384"/>
        <dbReference type="ChEBI" id="CHEBI:57912"/>
        <dbReference type="ChEBI" id="CHEBI:58866"/>
        <dbReference type="ChEBI" id="CHEBI:59776"/>
        <dbReference type="EC" id="4.2.1.20"/>
    </reaction>
</comment>
<comment type="pathway">
    <text evidence="1">Amino-acid biosynthesis; L-tryptophan biosynthesis; L-tryptophan from chorismate: step 5/5.</text>
</comment>
<comment type="subunit">
    <text evidence="1">Tetramer of two alpha and two beta chains.</text>
</comment>
<comment type="similarity">
    <text evidence="1">Belongs to the TrpA family.</text>
</comment>
<sequence>MSRIQSTLAALAAKNKKGLIPFITAGDPAPELTVPLMHALVAGGADILELGVPFSDPMAEGPVIQRACERALASGVSMHDVLGFVSEFRKTNNSTPVVLMGYANPIERMGQTKFILAAKAAGVDGTIVVDYPPEECEEFAATLKENDMDPIFLLSPTSTEERIQQVAKFGSGFSYYVSLKGVTGAANIDTKEVAERIAAIRKYVKLPIGVGFGIRDAATAKAVAQVSDAVVIGSRIIQELENSPREQAVERVQTFIAGIRKALDE</sequence>
<name>TRPA_JANMA</name>
<feature type="chain" id="PRO_1000018217" description="Tryptophan synthase alpha chain">
    <location>
        <begin position="1"/>
        <end position="265"/>
    </location>
</feature>
<feature type="active site" description="Proton acceptor" evidence="1">
    <location>
        <position position="49"/>
    </location>
</feature>
<feature type="active site" description="Proton acceptor" evidence="1">
    <location>
        <position position="60"/>
    </location>
</feature>
<accession>A6T006</accession>
<evidence type="ECO:0000255" key="1">
    <source>
        <dbReference type="HAMAP-Rule" id="MF_00131"/>
    </source>
</evidence>
<protein>
    <recommendedName>
        <fullName evidence="1">Tryptophan synthase alpha chain</fullName>
        <ecNumber evidence="1">4.2.1.20</ecNumber>
    </recommendedName>
</protein>
<keyword id="KW-0028">Amino-acid biosynthesis</keyword>
<keyword id="KW-0057">Aromatic amino acid biosynthesis</keyword>
<keyword id="KW-0456">Lyase</keyword>
<keyword id="KW-0822">Tryptophan biosynthesis</keyword>
<proteinExistence type="inferred from homology"/>
<dbReference type="EC" id="4.2.1.20" evidence="1"/>
<dbReference type="EMBL" id="CP000269">
    <property type="protein sequence ID" value="ABR88679.1"/>
    <property type="molecule type" value="Genomic_DNA"/>
</dbReference>
<dbReference type="RefSeq" id="WP_012080016.1">
    <property type="nucleotide sequence ID" value="NC_009659.1"/>
</dbReference>
<dbReference type="SMR" id="A6T006"/>
<dbReference type="STRING" id="375286.mma_2163"/>
<dbReference type="KEGG" id="mms:mma_2163"/>
<dbReference type="eggNOG" id="COG0159">
    <property type="taxonomic scope" value="Bacteria"/>
</dbReference>
<dbReference type="HOGENOM" id="CLU_016734_0_0_4"/>
<dbReference type="OrthoDB" id="9804578at2"/>
<dbReference type="UniPathway" id="UPA00035">
    <property type="reaction ID" value="UER00044"/>
</dbReference>
<dbReference type="Proteomes" id="UP000006388">
    <property type="component" value="Chromosome"/>
</dbReference>
<dbReference type="GO" id="GO:0005829">
    <property type="term" value="C:cytosol"/>
    <property type="evidence" value="ECO:0007669"/>
    <property type="project" value="TreeGrafter"/>
</dbReference>
<dbReference type="GO" id="GO:0004834">
    <property type="term" value="F:tryptophan synthase activity"/>
    <property type="evidence" value="ECO:0007669"/>
    <property type="project" value="UniProtKB-UniRule"/>
</dbReference>
<dbReference type="CDD" id="cd04724">
    <property type="entry name" value="Tryptophan_synthase_alpha"/>
    <property type="match status" value="1"/>
</dbReference>
<dbReference type="FunFam" id="3.20.20.70:FF:000037">
    <property type="entry name" value="Tryptophan synthase alpha chain"/>
    <property type="match status" value="1"/>
</dbReference>
<dbReference type="Gene3D" id="3.20.20.70">
    <property type="entry name" value="Aldolase class I"/>
    <property type="match status" value="1"/>
</dbReference>
<dbReference type="HAMAP" id="MF_00131">
    <property type="entry name" value="Trp_synth_alpha"/>
    <property type="match status" value="1"/>
</dbReference>
<dbReference type="InterPro" id="IPR013785">
    <property type="entry name" value="Aldolase_TIM"/>
</dbReference>
<dbReference type="InterPro" id="IPR011060">
    <property type="entry name" value="RibuloseP-bd_barrel"/>
</dbReference>
<dbReference type="InterPro" id="IPR018204">
    <property type="entry name" value="Trp_synthase_alpha_AS"/>
</dbReference>
<dbReference type="InterPro" id="IPR002028">
    <property type="entry name" value="Trp_synthase_suA"/>
</dbReference>
<dbReference type="NCBIfam" id="TIGR00262">
    <property type="entry name" value="trpA"/>
    <property type="match status" value="1"/>
</dbReference>
<dbReference type="PANTHER" id="PTHR43406:SF1">
    <property type="entry name" value="TRYPTOPHAN SYNTHASE ALPHA CHAIN, CHLOROPLASTIC"/>
    <property type="match status" value="1"/>
</dbReference>
<dbReference type="PANTHER" id="PTHR43406">
    <property type="entry name" value="TRYPTOPHAN SYNTHASE, ALPHA CHAIN"/>
    <property type="match status" value="1"/>
</dbReference>
<dbReference type="Pfam" id="PF00290">
    <property type="entry name" value="Trp_syntA"/>
    <property type="match status" value="1"/>
</dbReference>
<dbReference type="SUPFAM" id="SSF51366">
    <property type="entry name" value="Ribulose-phoshate binding barrel"/>
    <property type="match status" value="1"/>
</dbReference>
<dbReference type="PROSITE" id="PS00167">
    <property type="entry name" value="TRP_SYNTHASE_ALPHA"/>
    <property type="match status" value="1"/>
</dbReference>
<reference key="1">
    <citation type="journal article" date="2007" name="PLoS Genet.">
        <title>Genome analysis of Minibacterium massiliensis highlights the convergent evolution of water-living bacteria.</title>
        <authorList>
            <person name="Audic S."/>
            <person name="Robert C."/>
            <person name="Campagna B."/>
            <person name="Parinello H."/>
            <person name="Claverie J.-M."/>
            <person name="Raoult D."/>
            <person name="Drancourt M."/>
        </authorList>
    </citation>
    <scope>NUCLEOTIDE SEQUENCE [LARGE SCALE GENOMIC DNA]</scope>
    <source>
        <strain>Marseille</strain>
    </source>
</reference>
<organism>
    <name type="scientific">Janthinobacterium sp. (strain Marseille)</name>
    <name type="common">Minibacterium massiliensis</name>
    <dbReference type="NCBI Taxonomy" id="375286"/>
    <lineage>
        <taxon>Bacteria</taxon>
        <taxon>Pseudomonadati</taxon>
        <taxon>Pseudomonadota</taxon>
        <taxon>Betaproteobacteria</taxon>
        <taxon>Burkholderiales</taxon>
        <taxon>Oxalobacteraceae</taxon>
        <taxon>Janthinobacterium</taxon>
    </lineage>
</organism>
<gene>
    <name evidence="1" type="primary">trpA</name>
    <name type="ordered locus">mma_2163</name>
</gene>